<accession>P0C2B1</accession>
<accession>B4XT49</accession>
<feature type="signal peptide" evidence="1">
    <location>
        <begin position="1"/>
        <end position="22"/>
    </location>
</feature>
<feature type="propeptide" id="PRO_0000316912" evidence="2">
    <location>
        <begin position="23"/>
        <end position="46"/>
    </location>
</feature>
<feature type="peptide" id="PRO_0000271476" description="Conotoxin ViVB" evidence="2">
    <location>
        <begin position="47"/>
        <end position="58"/>
    </location>
</feature>
<feature type="modified residue" description="Pyrrolidone carboxylic acid" evidence="2">
    <location>
        <position position="47"/>
    </location>
</feature>
<feature type="modified residue" description="Valine amide" evidence="2">
    <location>
        <position position="58"/>
    </location>
</feature>
<sequence length="59" mass="6439">MRCVPVFIILLLLIPSAPSAAVQPKTEKDDVPLASFHDSAMRILSRQCCPTIPECCRVG</sequence>
<proteinExistence type="evidence at protein level"/>
<keyword id="KW-0027">Amidation</keyword>
<keyword id="KW-0903">Direct protein sequencing</keyword>
<keyword id="KW-1015">Disulfide bond</keyword>
<keyword id="KW-0873">Pyrrolidone carboxylic acid</keyword>
<keyword id="KW-0964">Secreted</keyword>
<keyword id="KW-0732">Signal</keyword>
<keyword id="KW-0800">Toxin</keyword>
<evidence type="ECO:0000255" key="1"/>
<evidence type="ECO:0000269" key="2">
    <source>
    </source>
</evidence>
<evidence type="ECO:0000303" key="3">
    <source>
    </source>
</evidence>
<evidence type="ECO:0000303" key="4">
    <source>
    </source>
</evidence>
<evidence type="ECO:0000305" key="5"/>
<evidence type="ECO:0000305" key="6">
    <source>
    </source>
</evidence>
<dbReference type="EMBL" id="EU090177">
    <property type="protein sequence ID" value="ABW77585.1"/>
    <property type="molecule type" value="mRNA"/>
</dbReference>
<dbReference type="ConoServer" id="2834">
    <property type="toxin name" value="ViVB precursor"/>
</dbReference>
<dbReference type="GO" id="GO:0005576">
    <property type="term" value="C:extracellular region"/>
    <property type="evidence" value="ECO:0007669"/>
    <property type="project" value="UniProtKB-SubCell"/>
</dbReference>
<dbReference type="GO" id="GO:0090729">
    <property type="term" value="F:toxin activity"/>
    <property type="evidence" value="ECO:0007669"/>
    <property type="project" value="UniProtKB-KW"/>
</dbReference>
<dbReference type="InterPro" id="IPR031565">
    <property type="entry name" value="T-conotoxin"/>
</dbReference>
<dbReference type="Pfam" id="PF16981">
    <property type="entry name" value="Chi-conotoxin"/>
    <property type="match status" value="1"/>
</dbReference>
<name>CT5B_CONVR</name>
<organism>
    <name type="scientific">Conus virgo</name>
    <name type="common">Virgin cone</name>
    <dbReference type="NCBI Taxonomy" id="89427"/>
    <lineage>
        <taxon>Eukaryota</taxon>
        <taxon>Metazoa</taxon>
        <taxon>Spiralia</taxon>
        <taxon>Lophotrochozoa</taxon>
        <taxon>Mollusca</taxon>
        <taxon>Gastropoda</taxon>
        <taxon>Caenogastropoda</taxon>
        <taxon>Neogastropoda</taxon>
        <taxon>Conoidea</taxon>
        <taxon>Conidae</taxon>
        <taxon>Conus</taxon>
        <taxon>Virgiconus</taxon>
    </lineage>
</organism>
<protein>
    <recommendedName>
        <fullName evidence="3">Conotoxin ViVB</fullName>
    </recommendedName>
    <alternativeName>
        <fullName evidence="4">Vi5.2</fullName>
    </alternativeName>
</protein>
<comment type="subcellular location">
    <subcellularLocation>
        <location evidence="2">Secreted</location>
    </subcellularLocation>
</comment>
<comment type="tissue specificity">
    <text evidence="6">Expressed by the venom duct.</text>
</comment>
<comment type="domain">
    <text evidence="5">The cysteine framework is V (CC-CC).</text>
</comment>
<comment type="PTM">
    <text evidence="5">Contains 2 disulfide bonds that can be either 'C1-C3, C2-C4' or 'C1-C4, C2-C3', since these disulfide connectivities have been observed for conotoxins with cysteine framework V (for examples, see AC P0DQQ7 and AC P81755).</text>
</comment>
<comment type="mass spectrometry" mass="1328.5" method="MALDI" evidence="2"/>
<comment type="similarity">
    <text evidence="5">Belongs to the conotoxin T superfamily.</text>
</comment>
<reference key="1">
    <citation type="journal article" date="2007" name="Peptides">
        <title>Identification of six novel T-1 conotoxins from Conus pulicarius by molecular cloning.</title>
        <authorList>
            <person name="Peng C."/>
            <person name="Wu X."/>
            <person name="Han Y."/>
            <person name="Yuan D."/>
            <person name="Chi C."/>
            <person name="Wang C."/>
        </authorList>
    </citation>
    <scope>NUCLEOTIDE SEQUENCE [MRNA]</scope>
    <source>
        <tissue>Venom duct</tissue>
    </source>
</reference>
<reference key="2">
    <citation type="journal article" date="2006" name="Toxicon">
        <title>Fourier transform mass spectrometry: a powerful tool for toxin analysis.</title>
        <authorList>
            <person name="Quinton L."/>
            <person name="Le Caer J.-P."/>
            <person name="Vinh J."/>
            <person name="Gilles N."/>
            <person name="Chamot-Rooke J."/>
        </authorList>
    </citation>
    <scope>PROTEIN SEQUENCE OF 47-58</scope>
    <scope>PYROGLUTAMATE FORMATION AT GLN-47</scope>
    <scope>AMIDATION AT VAL-58</scope>
    <scope>MASS SPECTROMETRY</scope>
    <scope>SUBCELLULAR LOCATION</scope>
    <source>
        <tissue>Venom</tissue>
    </source>
</reference>